<evidence type="ECO:0000256" key="1">
    <source>
        <dbReference type="SAM" id="MobiDB-lite"/>
    </source>
</evidence>
<evidence type="ECO:0000305" key="2"/>
<proteinExistence type="predicted"/>
<reference key="1">
    <citation type="journal article" date="1986" name="Nucleic Acids Res.">
        <title>RNA 2 of tobacco rattle virus strain TCM encodes an unexpected gene.</title>
        <authorList>
            <person name="Angenent G.C."/>
            <person name="Linthorst H.J.M."/>
            <person name="van Belkum A.F."/>
            <person name="Cornelissen B.J.C."/>
            <person name="Bol J.F."/>
        </authorList>
    </citation>
    <scope>NUCLEOTIDE SEQUENCE [GENOMIC RNA]</scope>
</reference>
<dbReference type="EMBL" id="X03955">
    <property type="protein sequence ID" value="CAA27584.1"/>
    <property type="molecule type" value="Genomic_RNA"/>
</dbReference>
<dbReference type="PIR" id="A04189">
    <property type="entry name" value="VCBVCT"/>
</dbReference>
<dbReference type="GO" id="GO:0019028">
    <property type="term" value="C:viral capsid"/>
    <property type="evidence" value="ECO:0007669"/>
    <property type="project" value="UniProtKB-KW"/>
</dbReference>
<dbReference type="GO" id="GO:0005198">
    <property type="term" value="F:structural molecule activity"/>
    <property type="evidence" value="ECO:0007669"/>
    <property type="project" value="InterPro"/>
</dbReference>
<dbReference type="Gene3D" id="1.20.120.70">
    <property type="entry name" value="Tobacco mosaic virus-like, coat protein"/>
    <property type="match status" value="1"/>
</dbReference>
<dbReference type="InterPro" id="IPR001337">
    <property type="entry name" value="TMV-like_coat"/>
</dbReference>
<dbReference type="InterPro" id="IPR036417">
    <property type="entry name" value="TMV-like_coat_sf"/>
</dbReference>
<dbReference type="Pfam" id="PF00721">
    <property type="entry name" value="TMV_coat"/>
    <property type="match status" value="1"/>
</dbReference>
<dbReference type="SUPFAM" id="SSF47195">
    <property type="entry name" value="TMV-like viral coat proteins"/>
    <property type="match status" value="1"/>
</dbReference>
<accession>P05072</accession>
<comment type="subcellular location">
    <subcellularLocation>
        <location evidence="2">Virion</location>
    </subcellularLocation>
</comment>
<protein>
    <recommendedName>
        <fullName>Coat protein</fullName>
    </recommendedName>
    <alternativeName>
        <fullName>Capsid protein</fullName>
    </alternativeName>
</protein>
<organismHost>
    <name type="scientific">Beta vulgaris</name>
    <name type="common">Sugar beet</name>
    <dbReference type="NCBI Taxonomy" id="161934"/>
</organismHost>
<organismHost>
    <name type="scientific">Capsicum annuum</name>
    <name type="common">Capsicum pepper</name>
    <dbReference type="NCBI Taxonomy" id="4072"/>
</organismHost>
<organismHost>
    <name type="scientific">Hyacinthus</name>
    <dbReference type="NCBI Taxonomy" id="82024"/>
</organismHost>
<organismHost>
    <name type="scientific">Narcissus pseudonarcissus</name>
    <name type="common">Daffodil</name>
    <dbReference type="NCBI Taxonomy" id="39639"/>
</organismHost>
<organismHost>
    <name type="scientific">Nicotiana tabacum</name>
    <name type="common">Common tobacco</name>
    <dbReference type="NCBI Taxonomy" id="4097"/>
</organismHost>
<organismHost>
    <name type="scientific">Solanum tuberosum</name>
    <name type="common">Potato</name>
    <dbReference type="NCBI Taxonomy" id="4113"/>
</organismHost>
<organismHost>
    <name type="scientific">Spinacia oleracea</name>
    <name type="common">Spinach</name>
    <dbReference type="NCBI Taxonomy" id="3562"/>
</organismHost>
<organismHost>
    <name type="scientific">Stellaria media</name>
    <name type="common">Common chickweed</name>
    <name type="synonym">Alsine media</name>
    <dbReference type="NCBI Taxonomy" id="13274"/>
</organismHost>
<organismHost>
    <name type="scientific">Tulipa</name>
    <dbReference type="NCBI Taxonomy" id="13305"/>
</organismHost>
<organismHost>
    <name type="scientific">Viola arvensis</name>
    <name type="common">European field pansy</name>
    <name type="synonym">Field violet</name>
    <dbReference type="NCBI Taxonomy" id="97415"/>
</organismHost>
<feature type="chain" id="PRO_0000222507" description="Coat protein">
    <location>
        <begin position="1"/>
        <end position="205"/>
    </location>
</feature>
<feature type="region of interest" description="Disordered" evidence="1">
    <location>
        <begin position="98"/>
        <end position="130"/>
    </location>
</feature>
<feature type="compositionally biased region" description="Basic and acidic residues" evidence="1">
    <location>
        <begin position="98"/>
        <end position="111"/>
    </location>
</feature>
<keyword id="KW-0167">Capsid protein</keyword>
<keyword id="KW-0946">Virion</keyword>
<name>COAT_TRVTC</name>
<organism>
    <name type="scientific">Tobacco rattle virus (strain TCM)</name>
    <dbReference type="NCBI Taxonomy" id="12299"/>
    <lineage>
        <taxon>Viruses</taxon>
        <taxon>Riboviria</taxon>
        <taxon>Orthornavirae</taxon>
        <taxon>Kitrinoviricota</taxon>
        <taxon>Alsuviricetes</taxon>
        <taxon>Martellivirales</taxon>
        <taxon>Virgaviridae</taxon>
        <taxon>Tobravirus</taxon>
        <taxon>Tobacco rattle virus</taxon>
    </lineage>
</organism>
<sequence length="205" mass="22394">MAGSYGETFDGKILDDLSGAWVEKHNWSDILRRLTKIKFALQADRDMIPGIVEDLSTEIPVDENTRFPSGKVYHLLTKEMLMAIEAIHAASSFKRRAEEKNNVNPRQRFEAESSSSQLPSGGLVVRPAAGSGDSSLGEDLFSNSKLDDASTAFHKSLATLKGSRPKAVVQRTFEKEYSLRWTAAAPVAAAGGTPPGGRSWTWNLV</sequence>